<evidence type="ECO:0000250" key="1"/>
<evidence type="ECO:0000256" key="2">
    <source>
        <dbReference type="SAM" id="MobiDB-lite"/>
    </source>
</evidence>
<evidence type="ECO:0000269" key="3">
    <source>
    </source>
</evidence>
<evidence type="ECO:0000305" key="4"/>
<proteinExistence type="evidence at protein level"/>
<keyword id="KW-0002">3D-structure</keyword>
<keyword id="KW-1003">Cell membrane</keyword>
<keyword id="KW-0472">Membrane</keyword>
<keyword id="KW-0653">Protein transport</keyword>
<keyword id="KW-1185">Reference proteome</keyword>
<keyword id="KW-0811">Translocation</keyword>
<keyword id="KW-0812">Transmembrane</keyword>
<keyword id="KW-1133">Transmembrane helix</keyword>
<keyword id="KW-0813">Transport</keyword>
<dbReference type="EMBL" id="AE000657">
    <property type="protein sequence ID" value="AAC06462.1"/>
    <property type="molecule type" value="Genomic_DNA"/>
</dbReference>
<dbReference type="PIR" id="F70309">
    <property type="entry name" value="F70309"/>
</dbReference>
<dbReference type="RefSeq" id="NP_213064.1">
    <property type="nucleotide sequence ID" value="NC_000918.1"/>
</dbReference>
<dbReference type="RefSeq" id="WP_010880002.1">
    <property type="nucleotide sequence ID" value="NC_000918.1"/>
</dbReference>
<dbReference type="PDB" id="3DL8">
    <property type="method" value="X-ray"/>
    <property type="resolution" value="7.50 A"/>
    <property type="chains" value="E/F=1-100"/>
</dbReference>
<dbReference type="PDBsum" id="3DL8"/>
<dbReference type="SMR" id="O66505"/>
<dbReference type="DIP" id="DIP-59811N"/>
<dbReference type="FunCoup" id="O66505">
    <property type="interactions" value="144"/>
</dbReference>
<dbReference type="IntAct" id="O66505">
    <property type="interactions" value="2"/>
</dbReference>
<dbReference type="STRING" id="224324.aq_098"/>
<dbReference type="EnsemblBacteria" id="AAC06462">
    <property type="protein sequence ID" value="AAC06462"/>
    <property type="gene ID" value="aq_098"/>
</dbReference>
<dbReference type="KEGG" id="aae:aq_098"/>
<dbReference type="eggNOG" id="COG1314">
    <property type="taxonomic scope" value="Bacteria"/>
</dbReference>
<dbReference type="HOGENOM" id="CLU_094156_2_2_0"/>
<dbReference type="InParanoid" id="O66505"/>
<dbReference type="EvolutionaryTrace" id="O66505"/>
<dbReference type="Proteomes" id="UP000000798">
    <property type="component" value="Chromosome"/>
</dbReference>
<dbReference type="GO" id="GO:0005886">
    <property type="term" value="C:plasma membrane"/>
    <property type="evidence" value="ECO:0000318"/>
    <property type="project" value="GO_Central"/>
</dbReference>
<dbReference type="GO" id="GO:0015450">
    <property type="term" value="F:protein-transporting ATPase activity"/>
    <property type="evidence" value="ECO:0007669"/>
    <property type="project" value="InterPro"/>
</dbReference>
<dbReference type="GO" id="GO:0065002">
    <property type="term" value="P:intracellular protein transmembrane transport"/>
    <property type="evidence" value="ECO:0000318"/>
    <property type="project" value="GO_Central"/>
</dbReference>
<dbReference type="GO" id="GO:0009306">
    <property type="term" value="P:protein secretion"/>
    <property type="evidence" value="ECO:0007669"/>
    <property type="project" value="InterPro"/>
</dbReference>
<dbReference type="GO" id="GO:0043952">
    <property type="term" value="P:protein transport by the Sec complex"/>
    <property type="evidence" value="ECO:0000318"/>
    <property type="project" value="GO_Central"/>
</dbReference>
<dbReference type="InterPro" id="IPR004692">
    <property type="entry name" value="SecG"/>
</dbReference>
<dbReference type="NCBIfam" id="TIGR00810">
    <property type="entry name" value="secG"/>
    <property type="match status" value="1"/>
</dbReference>
<dbReference type="PANTHER" id="PTHR34182">
    <property type="entry name" value="PROTEIN-EXPORT MEMBRANE PROTEIN SECG"/>
    <property type="match status" value="1"/>
</dbReference>
<dbReference type="PANTHER" id="PTHR34182:SF1">
    <property type="entry name" value="PROTEIN-EXPORT MEMBRANE PROTEIN SECG"/>
    <property type="match status" value="1"/>
</dbReference>
<dbReference type="Pfam" id="PF03840">
    <property type="entry name" value="SecG"/>
    <property type="match status" value="1"/>
</dbReference>
<dbReference type="PRINTS" id="PR01651">
    <property type="entry name" value="SECGEXPORT"/>
</dbReference>
<name>SECG_AQUAE</name>
<protein>
    <recommendedName>
        <fullName>Protein-export membrane protein SecG</fullName>
    </recommendedName>
</protein>
<comment type="function">
    <text>Subunit of the protein translocation channel SecYEG.</text>
</comment>
<comment type="subunit">
    <text evidence="3">Component of the Sec protein translocase complex. Heterotrimer consisting of SecY, SecE and SecG subunits. The heterotrimers can form oligomers, although 1 heterotrimer is thought to be able to translocate proteins. Interacts with SecDF, and other proteins may be involved. The channel interacts with SecA via subunit SecY.</text>
</comment>
<comment type="subcellular location">
    <subcellularLocation>
        <location evidence="1">Cell membrane</location>
        <topology evidence="1">Multi-pass membrane protein</topology>
    </subcellularLocation>
</comment>
<comment type="similarity">
    <text evidence="4">Belongs to the SecG family.</text>
</comment>
<reference key="1">
    <citation type="journal article" date="1998" name="Nature">
        <title>The complete genome of the hyperthermophilic bacterium Aquifex aeolicus.</title>
        <authorList>
            <person name="Deckert G."/>
            <person name="Warren P.V."/>
            <person name="Gaasterland T."/>
            <person name="Young W.G."/>
            <person name="Lenox A.L."/>
            <person name="Graham D.E."/>
            <person name="Overbeek R."/>
            <person name="Snead M.A."/>
            <person name="Keller M."/>
            <person name="Aujay M."/>
            <person name="Huber R."/>
            <person name="Feldman R.A."/>
            <person name="Short J.M."/>
            <person name="Olsen G.J."/>
            <person name="Swanson R.V."/>
        </authorList>
    </citation>
    <scope>NUCLEOTIDE SEQUENCE [LARGE SCALE GENOMIC DNA]</scope>
    <source>
        <strain>VF5</strain>
    </source>
</reference>
<reference key="2">
    <citation type="journal article" date="2008" name="Nature">
        <title>Structure of a complex of the ATPase SecA and the protein-translocation channel.</title>
        <authorList>
            <person name="Zimmer J."/>
            <person name="Nam Y."/>
            <person name="Rapoport T.A."/>
        </authorList>
    </citation>
    <scope>X-RAY CRYSTALLOGRAPHY (7.5 ANGSTROMS) OF SECYEG IN COMPLEX WITH B.SUBTILIS SECA</scope>
</reference>
<organism>
    <name type="scientific">Aquifex aeolicus (strain VF5)</name>
    <dbReference type="NCBI Taxonomy" id="224324"/>
    <lineage>
        <taxon>Bacteria</taxon>
        <taxon>Pseudomonadati</taxon>
        <taxon>Aquificota</taxon>
        <taxon>Aquificia</taxon>
        <taxon>Aquificales</taxon>
        <taxon>Aquificaceae</taxon>
        <taxon>Aquifex</taxon>
    </lineage>
</organism>
<accession>O66505</accession>
<gene>
    <name type="primary">secG</name>
    <name type="ordered locus">aq_098</name>
</gene>
<feature type="chain" id="PRO_0000157219" description="Protein-export membrane protein SecG">
    <location>
        <begin position="1"/>
        <end position="100"/>
    </location>
</feature>
<feature type="topological domain" description="Periplasmic" evidence="4">
    <location>
        <begin position="1"/>
        <end position="7"/>
    </location>
</feature>
<feature type="transmembrane region" description="Helical; Name=1">
    <location>
        <begin position="8"/>
        <end position="32"/>
    </location>
</feature>
<feature type="topological domain" description="Cytoplasmic">
    <location>
        <begin position="33"/>
        <end position="48"/>
    </location>
</feature>
<feature type="transmembrane region" description="Helical; Name=2">
    <location>
        <begin position="49"/>
        <end position="70"/>
    </location>
</feature>
<feature type="topological domain" description="Periplasmic" evidence="4">
    <location>
        <begin position="71"/>
        <end position="100"/>
    </location>
</feature>
<feature type="region of interest" description="Disordered" evidence="2">
    <location>
        <begin position="77"/>
        <end position="100"/>
    </location>
</feature>
<feature type="compositionally biased region" description="Polar residues" evidence="2">
    <location>
        <begin position="83"/>
        <end position="100"/>
    </location>
</feature>
<sequence length="100" mass="10464">MYYALLTLFVIIAVVLIISTLLQKGRGDVGAAFGGGMGQSIFGVGGVETILTKATYWLGALFLVLALLLSVIPKEKGSVVEKSVQTEQSEGKGTTQESGK</sequence>